<evidence type="ECO:0000255" key="1">
    <source>
        <dbReference type="HAMAP-Rule" id="MF_01315"/>
    </source>
</evidence>
<evidence type="ECO:0000256" key="2">
    <source>
        <dbReference type="SAM" id="MobiDB-lite"/>
    </source>
</evidence>
<evidence type="ECO:0000305" key="3"/>
<reference key="1">
    <citation type="submission" date="2008-05" db="EMBL/GenBank/DDBJ databases">
        <title>Genome sequence of Clostridium botulinum Ba4 strain 657.</title>
        <authorList>
            <person name="Shrivastava S."/>
            <person name="Brown J.L."/>
            <person name="Bruce D."/>
            <person name="Detter C."/>
            <person name="Munk C."/>
            <person name="Smith L.A."/>
            <person name="Smith T.J."/>
            <person name="Sutton G."/>
            <person name="Brettin T.S."/>
        </authorList>
    </citation>
    <scope>NUCLEOTIDE SEQUENCE [LARGE SCALE GENOMIC DNA]</scope>
    <source>
        <strain>657 / Type Ba4</strain>
    </source>
</reference>
<name>RS13_CLOB6</name>
<accession>C3KVM5</accession>
<dbReference type="EMBL" id="CP001083">
    <property type="protein sequence ID" value="ACQ52226.1"/>
    <property type="molecule type" value="Genomic_DNA"/>
</dbReference>
<dbReference type="RefSeq" id="WP_003357564.1">
    <property type="nucleotide sequence ID" value="NC_012658.1"/>
</dbReference>
<dbReference type="SMR" id="C3KVM5"/>
<dbReference type="GeneID" id="92940224"/>
<dbReference type="KEGG" id="cbi:CLJ_B3763"/>
<dbReference type="HOGENOM" id="CLU_103849_1_2_9"/>
<dbReference type="Proteomes" id="UP000002333">
    <property type="component" value="Chromosome"/>
</dbReference>
<dbReference type="GO" id="GO:0005829">
    <property type="term" value="C:cytosol"/>
    <property type="evidence" value="ECO:0007669"/>
    <property type="project" value="TreeGrafter"/>
</dbReference>
<dbReference type="GO" id="GO:0015935">
    <property type="term" value="C:small ribosomal subunit"/>
    <property type="evidence" value="ECO:0007669"/>
    <property type="project" value="TreeGrafter"/>
</dbReference>
<dbReference type="GO" id="GO:0019843">
    <property type="term" value="F:rRNA binding"/>
    <property type="evidence" value="ECO:0007669"/>
    <property type="project" value="UniProtKB-UniRule"/>
</dbReference>
<dbReference type="GO" id="GO:0003735">
    <property type="term" value="F:structural constituent of ribosome"/>
    <property type="evidence" value="ECO:0007669"/>
    <property type="project" value="InterPro"/>
</dbReference>
<dbReference type="GO" id="GO:0000049">
    <property type="term" value="F:tRNA binding"/>
    <property type="evidence" value="ECO:0007669"/>
    <property type="project" value="UniProtKB-UniRule"/>
</dbReference>
<dbReference type="GO" id="GO:0006412">
    <property type="term" value="P:translation"/>
    <property type="evidence" value="ECO:0007669"/>
    <property type="project" value="UniProtKB-UniRule"/>
</dbReference>
<dbReference type="FunFam" id="1.10.8.50:FF:000001">
    <property type="entry name" value="30S ribosomal protein S13"/>
    <property type="match status" value="1"/>
</dbReference>
<dbReference type="FunFam" id="4.10.910.10:FF:000001">
    <property type="entry name" value="30S ribosomal protein S13"/>
    <property type="match status" value="1"/>
</dbReference>
<dbReference type="Gene3D" id="1.10.8.50">
    <property type="match status" value="1"/>
</dbReference>
<dbReference type="Gene3D" id="4.10.910.10">
    <property type="entry name" value="30s ribosomal protein s13, domain 2"/>
    <property type="match status" value="1"/>
</dbReference>
<dbReference type="HAMAP" id="MF_01315">
    <property type="entry name" value="Ribosomal_uS13"/>
    <property type="match status" value="1"/>
</dbReference>
<dbReference type="InterPro" id="IPR027437">
    <property type="entry name" value="Rbsml_uS13_C"/>
</dbReference>
<dbReference type="InterPro" id="IPR001892">
    <property type="entry name" value="Ribosomal_uS13"/>
</dbReference>
<dbReference type="InterPro" id="IPR010979">
    <property type="entry name" value="Ribosomal_uS13-like_H2TH"/>
</dbReference>
<dbReference type="InterPro" id="IPR019980">
    <property type="entry name" value="Ribosomal_uS13_bac-type"/>
</dbReference>
<dbReference type="InterPro" id="IPR018269">
    <property type="entry name" value="Ribosomal_uS13_CS"/>
</dbReference>
<dbReference type="NCBIfam" id="TIGR03631">
    <property type="entry name" value="uS13_bact"/>
    <property type="match status" value="1"/>
</dbReference>
<dbReference type="PANTHER" id="PTHR10871">
    <property type="entry name" value="30S RIBOSOMAL PROTEIN S13/40S RIBOSOMAL PROTEIN S18"/>
    <property type="match status" value="1"/>
</dbReference>
<dbReference type="PANTHER" id="PTHR10871:SF1">
    <property type="entry name" value="SMALL RIBOSOMAL SUBUNIT PROTEIN US13M"/>
    <property type="match status" value="1"/>
</dbReference>
<dbReference type="Pfam" id="PF00416">
    <property type="entry name" value="Ribosomal_S13"/>
    <property type="match status" value="1"/>
</dbReference>
<dbReference type="PIRSF" id="PIRSF002134">
    <property type="entry name" value="Ribosomal_S13"/>
    <property type="match status" value="1"/>
</dbReference>
<dbReference type="SUPFAM" id="SSF46946">
    <property type="entry name" value="S13-like H2TH domain"/>
    <property type="match status" value="1"/>
</dbReference>
<dbReference type="PROSITE" id="PS00646">
    <property type="entry name" value="RIBOSOMAL_S13_1"/>
    <property type="match status" value="1"/>
</dbReference>
<dbReference type="PROSITE" id="PS50159">
    <property type="entry name" value="RIBOSOMAL_S13_2"/>
    <property type="match status" value="1"/>
</dbReference>
<sequence>MARISGIDLPKEKRVEIGLTYIYGIGLPTSQEILKATGVNPDTRVKDLSEEEVNAIRDYVNKNVKVEGDLRREIKLNIKRLVEIGSYRGIRHRRNLPVRGQKTKTNARTRKGPKRAIGGKKKK</sequence>
<keyword id="KW-0687">Ribonucleoprotein</keyword>
<keyword id="KW-0689">Ribosomal protein</keyword>
<keyword id="KW-0694">RNA-binding</keyword>
<keyword id="KW-0699">rRNA-binding</keyword>
<keyword id="KW-0820">tRNA-binding</keyword>
<protein>
    <recommendedName>
        <fullName evidence="1">Small ribosomal subunit protein uS13</fullName>
    </recommendedName>
    <alternativeName>
        <fullName evidence="3">30S ribosomal protein S13</fullName>
    </alternativeName>
</protein>
<feature type="chain" id="PRO_1000214385" description="Small ribosomal subunit protein uS13">
    <location>
        <begin position="1"/>
        <end position="123"/>
    </location>
</feature>
<feature type="region of interest" description="Disordered" evidence="2">
    <location>
        <begin position="93"/>
        <end position="123"/>
    </location>
</feature>
<comment type="function">
    <text evidence="1">Located at the top of the head of the 30S subunit, it contacts several helices of the 16S rRNA. In the 70S ribosome it contacts the 23S rRNA (bridge B1a) and protein L5 of the 50S subunit (bridge B1b), connecting the 2 subunits; these bridges are implicated in subunit movement. Contacts the tRNAs in the A and P-sites.</text>
</comment>
<comment type="subunit">
    <text evidence="1">Part of the 30S ribosomal subunit. Forms a loose heterodimer with protein S19. Forms two bridges to the 50S subunit in the 70S ribosome.</text>
</comment>
<comment type="similarity">
    <text evidence="1">Belongs to the universal ribosomal protein uS13 family.</text>
</comment>
<organism>
    <name type="scientific">Clostridium botulinum (strain 657 / Type Ba4)</name>
    <dbReference type="NCBI Taxonomy" id="515621"/>
    <lineage>
        <taxon>Bacteria</taxon>
        <taxon>Bacillati</taxon>
        <taxon>Bacillota</taxon>
        <taxon>Clostridia</taxon>
        <taxon>Eubacteriales</taxon>
        <taxon>Clostridiaceae</taxon>
        <taxon>Clostridium</taxon>
    </lineage>
</organism>
<gene>
    <name evidence="1" type="primary">rpsM</name>
    <name type="ordered locus">CLJ_B3763</name>
</gene>
<proteinExistence type="inferred from homology"/>